<name>KIN28_ENCCU</name>
<gene>
    <name type="primary">KIN28</name>
    <name type="ordered locus">ECU02_1450</name>
</gene>
<keyword id="KW-0067">ATP-binding</keyword>
<keyword id="KW-0131">Cell cycle</keyword>
<keyword id="KW-0132">Cell division</keyword>
<keyword id="KW-0418">Kinase</keyword>
<keyword id="KW-0547">Nucleotide-binding</keyword>
<keyword id="KW-0539">Nucleus</keyword>
<keyword id="KW-1185">Reference proteome</keyword>
<keyword id="KW-0723">Serine/threonine-protein kinase</keyword>
<keyword id="KW-0804">Transcription</keyword>
<keyword id="KW-0805">Transcription regulation</keyword>
<keyword id="KW-0808">Transferase</keyword>
<organism>
    <name type="scientific">Encephalitozoon cuniculi (strain GB-M1)</name>
    <name type="common">Microsporidian parasite</name>
    <dbReference type="NCBI Taxonomy" id="284813"/>
    <lineage>
        <taxon>Eukaryota</taxon>
        <taxon>Fungi</taxon>
        <taxon>Fungi incertae sedis</taxon>
        <taxon>Microsporidia</taxon>
        <taxon>Unikaryonidae</taxon>
        <taxon>Encephalitozoon</taxon>
    </lineage>
</organism>
<proteinExistence type="inferred from homology"/>
<comment type="function">
    <text evidence="1">Protein kinase component of transcription factor IIH (TFIIH) which phosphorylates the C-terminal domain of RNA polymerase II during transition from transcription to elongation after preinitiation complex (PIC) formation, thereby positively regulating transcription. Essential for both basal and activated transcription, and is involved in nucleotide excision repair (NER) of damaged DNA (By similarity).</text>
</comment>
<comment type="catalytic activity">
    <reaction>
        <text>[DNA-directed RNA polymerase] + ATP = phospho-[DNA-directed RNA polymerase] + ADP + H(+)</text>
        <dbReference type="Rhea" id="RHEA:10216"/>
        <dbReference type="Rhea" id="RHEA-COMP:11321"/>
        <dbReference type="Rhea" id="RHEA-COMP:11322"/>
        <dbReference type="ChEBI" id="CHEBI:15378"/>
        <dbReference type="ChEBI" id="CHEBI:30616"/>
        <dbReference type="ChEBI" id="CHEBI:43176"/>
        <dbReference type="ChEBI" id="CHEBI:68546"/>
        <dbReference type="ChEBI" id="CHEBI:456216"/>
        <dbReference type="EC" id="2.7.11.23"/>
    </reaction>
</comment>
<comment type="subunit">
    <text evidence="1">Component of the TFIIH holo complex.</text>
</comment>
<comment type="subcellular location">
    <subcellularLocation>
        <location evidence="1">Nucleus</location>
    </subcellularLocation>
</comment>
<comment type="similarity">
    <text evidence="4">Belongs to the protein kinase superfamily. CMGC Ser/Thr protein kinase family. CDC2/CDKX subfamily.</text>
</comment>
<dbReference type="EC" id="2.7.11.23"/>
<dbReference type="EMBL" id="AL590442">
    <property type="protein sequence ID" value="CAD25174.1"/>
    <property type="molecule type" value="Genomic_DNA"/>
</dbReference>
<dbReference type="RefSeq" id="NP_584670.1">
    <property type="nucleotide sequence ID" value="NM_001040859.1"/>
</dbReference>
<dbReference type="SMR" id="Q8SW92"/>
<dbReference type="FunCoup" id="Q8SW92">
    <property type="interactions" value="313"/>
</dbReference>
<dbReference type="STRING" id="284813.Q8SW92"/>
<dbReference type="GeneID" id="858660"/>
<dbReference type="KEGG" id="ecu:ECU02_1450"/>
<dbReference type="VEuPathDB" id="MicrosporidiaDB:ECU02_1450"/>
<dbReference type="HOGENOM" id="CLU_000288_181_6_1"/>
<dbReference type="InParanoid" id="Q8SW92"/>
<dbReference type="OMA" id="GIHHCHR"/>
<dbReference type="OrthoDB" id="1732493at2759"/>
<dbReference type="Proteomes" id="UP000000819">
    <property type="component" value="Chromosome II"/>
</dbReference>
<dbReference type="GO" id="GO:0005737">
    <property type="term" value="C:cytoplasm"/>
    <property type="evidence" value="ECO:0007669"/>
    <property type="project" value="TreeGrafter"/>
</dbReference>
<dbReference type="GO" id="GO:0070985">
    <property type="term" value="C:transcription factor TFIIK complex"/>
    <property type="evidence" value="ECO:0007669"/>
    <property type="project" value="TreeGrafter"/>
</dbReference>
<dbReference type="GO" id="GO:0005524">
    <property type="term" value="F:ATP binding"/>
    <property type="evidence" value="ECO:0007669"/>
    <property type="project" value="UniProtKB-KW"/>
</dbReference>
<dbReference type="GO" id="GO:0004693">
    <property type="term" value="F:cyclin-dependent protein serine/threonine kinase activity"/>
    <property type="evidence" value="ECO:0007669"/>
    <property type="project" value="TreeGrafter"/>
</dbReference>
<dbReference type="GO" id="GO:0008353">
    <property type="term" value="F:RNA polymerase II CTD heptapeptide repeat kinase activity"/>
    <property type="evidence" value="ECO:0007669"/>
    <property type="project" value="UniProtKB-EC"/>
</dbReference>
<dbReference type="GO" id="GO:0051301">
    <property type="term" value="P:cell division"/>
    <property type="evidence" value="ECO:0007669"/>
    <property type="project" value="UniProtKB-KW"/>
</dbReference>
<dbReference type="GO" id="GO:0045944">
    <property type="term" value="P:positive regulation of transcription by RNA polymerase II"/>
    <property type="evidence" value="ECO:0007669"/>
    <property type="project" value="TreeGrafter"/>
</dbReference>
<dbReference type="FunFam" id="1.10.510.10:FF:000624">
    <property type="entry name" value="Mitogen-activated protein kinase"/>
    <property type="match status" value="1"/>
</dbReference>
<dbReference type="Gene3D" id="3.30.200.20">
    <property type="entry name" value="Phosphorylase Kinase, domain 1"/>
    <property type="match status" value="1"/>
</dbReference>
<dbReference type="Gene3D" id="1.10.510.10">
    <property type="entry name" value="Transferase(Phosphotransferase) domain 1"/>
    <property type="match status" value="1"/>
</dbReference>
<dbReference type="InterPro" id="IPR050108">
    <property type="entry name" value="CDK"/>
</dbReference>
<dbReference type="InterPro" id="IPR011009">
    <property type="entry name" value="Kinase-like_dom_sf"/>
</dbReference>
<dbReference type="InterPro" id="IPR000719">
    <property type="entry name" value="Prot_kinase_dom"/>
</dbReference>
<dbReference type="InterPro" id="IPR008271">
    <property type="entry name" value="Ser/Thr_kinase_AS"/>
</dbReference>
<dbReference type="PANTHER" id="PTHR24056">
    <property type="entry name" value="CELL DIVISION PROTEIN KINASE"/>
    <property type="match status" value="1"/>
</dbReference>
<dbReference type="PANTHER" id="PTHR24056:SF0">
    <property type="entry name" value="CYCLIN-DEPENDENT KINASE 7"/>
    <property type="match status" value="1"/>
</dbReference>
<dbReference type="Pfam" id="PF00069">
    <property type="entry name" value="Pkinase"/>
    <property type="match status" value="1"/>
</dbReference>
<dbReference type="SMART" id="SM00220">
    <property type="entry name" value="S_TKc"/>
    <property type="match status" value="1"/>
</dbReference>
<dbReference type="SUPFAM" id="SSF56112">
    <property type="entry name" value="Protein kinase-like (PK-like)"/>
    <property type="match status" value="1"/>
</dbReference>
<dbReference type="PROSITE" id="PS50011">
    <property type="entry name" value="PROTEIN_KINASE_DOM"/>
    <property type="match status" value="1"/>
</dbReference>
<dbReference type="PROSITE" id="PS00108">
    <property type="entry name" value="PROTEIN_KINASE_ST"/>
    <property type="match status" value="1"/>
</dbReference>
<evidence type="ECO:0000250" key="1"/>
<evidence type="ECO:0000255" key="2">
    <source>
        <dbReference type="PROSITE-ProRule" id="PRU00159"/>
    </source>
</evidence>
<evidence type="ECO:0000255" key="3">
    <source>
        <dbReference type="PROSITE-ProRule" id="PRU10027"/>
    </source>
</evidence>
<evidence type="ECO:0000305" key="4"/>
<feature type="chain" id="PRO_0000384427" description="Probable serine/threonine-protein kinase KIN28 homolog">
    <location>
        <begin position="1"/>
        <end position="308"/>
    </location>
</feature>
<feature type="domain" description="Protein kinase" evidence="2">
    <location>
        <begin position="4"/>
        <end position="294"/>
    </location>
</feature>
<feature type="active site" description="Proton acceptor" evidence="2 3">
    <location>
        <position position="139"/>
    </location>
</feature>
<feature type="binding site" evidence="2">
    <location>
        <begin position="10"/>
        <end position="18"/>
    </location>
    <ligand>
        <name>ATP</name>
        <dbReference type="ChEBI" id="CHEBI:30616"/>
    </ligand>
</feature>
<feature type="binding site" evidence="2">
    <location>
        <position position="46"/>
    </location>
    <ligand>
        <name>ATP</name>
        <dbReference type="ChEBI" id="CHEBI:30616"/>
    </ligand>
</feature>
<reference key="1">
    <citation type="journal article" date="2001" name="Nature">
        <title>Genome sequence and gene compaction of the eukaryote parasite Encephalitozoon cuniculi.</title>
        <authorList>
            <person name="Katinka M.D."/>
            <person name="Duprat S."/>
            <person name="Cornillot E."/>
            <person name="Metenier G."/>
            <person name="Thomarat F."/>
            <person name="Prensier G."/>
            <person name="Barbe V."/>
            <person name="Peyretaillade E."/>
            <person name="Brottier P."/>
            <person name="Wincker P."/>
            <person name="Delbac F."/>
            <person name="El Alaoui H."/>
            <person name="Peyret P."/>
            <person name="Saurin W."/>
            <person name="Gouy M."/>
            <person name="Weissenbach J."/>
            <person name="Vivares C.P."/>
        </authorList>
    </citation>
    <scope>NUCLEOTIDE SEQUENCE [LARGE SCALE GENOMIC DNA]</scope>
    <source>
        <strain>GB-M1</strain>
    </source>
</reference>
<reference key="2">
    <citation type="journal article" date="2007" name="BMC Genomics">
        <title>The complement of protein kinases of the microsporidium Encephalitozoon cuniculi in relation to those of Saccharomyces cerevisiae and Schizosaccharomyces pombe.</title>
        <authorList>
            <person name="Miranda-Saavedra D."/>
            <person name="Stark M.J.R."/>
            <person name="Packer J.C."/>
            <person name="Vivares C.P."/>
            <person name="Doerig C."/>
            <person name="Barton G.J."/>
        </authorList>
    </citation>
    <scope>PREDICTION OF FUNCTION</scope>
</reference>
<sequence>MKTYIRERRLGEGTYAVIYLGYRALPQDKPLVSSGTRIEDVPVAIKKIKPTKYTQGHEISAIREIKSLKRIDSKYVVRLIDTFVYDKCVHIVLEYVETNLENVIRNSDKIIMPGDIKAWILMVLRGVYECHRLFIIHRDIKPNNILITSEGMVKLADFGLTRGIGNRMTPQAVTRWYRAPELLMGSRDYGSPVDMWSVGCVFAELFLRVPLFAGDTDIQQLDMIFRALGTPVEREWPGVSTLPEFLDFQQYPKASLNGLFSAASSDALDLLEKLLTLNPCNRISCDDAIKHPYFKSSPPPTPIGKLPV</sequence>
<accession>Q8SW92</accession>
<protein>
    <recommendedName>
        <fullName>Probable serine/threonine-protein kinase KIN28 homolog</fullName>
        <ecNumber>2.7.11.23</ecNumber>
    </recommendedName>
</protein>